<dbReference type="EMBL" id="AB006424">
    <property type="protein sequence ID" value="BAA33090.1"/>
    <property type="status" value="ALT_FRAME"/>
    <property type="molecule type" value="Genomic_DNA"/>
</dbReference>
<dbReference type="EMBL" id="AB006424">
    <property type="protein sequence ID" value="BAA33091.1"/>
    <property type="status" value="ALT_FRAME"/>
    <property type="molecule type" value="Genomic_DNA"/>
</dbReference>
<dbReference type="EMBL" id="AL009126">
    <property type="protein sequence ID" value="CAX52541.1"/>
    <property type="molecule type" value="Genomic_DNA"/>
</dbReference>
<dbReference type="PIR" id="F69746">
    <property type="entry name" value="F69746"/>
</dbReference>
<dbReference type="PIR" id="G69746">
    <property type="entry name" value="G69746"/>
</dbReference>
<dbReference type="RefSeq" id="WP_003246417.1">
    <property type="nucleotide sequence ID" value="NZ_OZ025638.1"/>
</dbReference>
<dbReference type="RefSeq" id="YP_003097671.1">
    <property type="nucleotide sequence ID" value="NC_000964.3"/>
</dbReference>
<dbReference type="FunCoup" id="O31425">
    <property type="interactions" value="65"/>
</dbReference>
<dbReference type="STRING" id="224308.BSU01935"/>
<dbReference type="PaxDb" id="224308-BSU01935"/>
<dbReference type="EnsemblBacteria" id="CAX52541">
    <property type="protein sequence ID" value="CAX52541"/>
    <property type="gene ID" value="BSU_01935"/>
</dbReference>
<dbReference type="GeneID" id="8302931"/>
<dbReference type="KEGG" id="bsu:BSU01935"/>
<dbReference type="PATRIC" id="fig|224308.179.peg.200"/>
<dbReference type="eggNOG" id="COG1266">
    <property type="taxonomic scope" value="Bacteria"/>
</dbReference>
<dbReference type="InParanoid" id="O31425"/>
<dbReference type="OrthoDB" id="2913949at2"/>
<dbReference type="BioCyc" id="BSUB:BSU01935-MONOMER"/>
<dbReference type="Proteomes" id="UP000001570">
    <property type="component" value="Chromosome"/>
</dbReference>
<dbReference type="GO" id="GO:0016020">
    <property type="term" value="C:membrane"/>
    <property type="evidence" value="ECO:0007669"/>
    <property type="project" value="UniProtKB-SubCell"/>
</dbReference>
<dbReference type="GO" id="GO:0004175">
    <property type="term" value="F:endopeptidase activity"/>
    <property type="evidence" value="ECO:0007669"/>
    <property type="project" value="UniProtKB-ARBA"/>
</dbReference>
<dbReference type="GO" id="GO:0030152">
    <property type="term" value="P:bacteriocin biosynthetic process"/>
    <property type="evidence" value="ECO:0007669"/>
    <property type="project" value="UniProtKB-KW"/>
</dbReference>
<dbReference type="GO" id="GO:0080120">
    <property type="term" value="P:CAAX-box protein maturation"/>
    <property type="evidence" value="ECO:0007669"/>
    <property type="project" value="UniProtKB-ARBA"/>
</dbReference>
<dbReference type="InterPro" id="IPR003675">
    <property type="entry name" value="Rce1/LyrA-like_dom"/>
</dbReference>
<dbReference type="Pfam" id="PF02517">
    <property type="entry name" value="Rce1-like"/>
    <property type="match status" value="1"/>
</dbReference>
<comment type="function">
    <text evidence="2">Required for production of the bacteriocin SkfA.</text>
</comment>
<comment type="subcellular location">
    <subcellularLocation>
        <location evidence="5">Membrane</location>
        <topology evidence="5">Multi-pass membrane protein</topology>
    </subcellularLocation>
</comment>
<comment type="induction">
    <text evidence="2 3">By Spo0A (PubMed:12817086) and PhoP, during nutrient starvation, especially phosphate starvation. Repressed by AbrB during normal growth when nutrients are plentiful, in association with the transcriptional repressor Abh.</text>
</comment>
<comment type="disruption phenotype">
    <text evidence="2">When the skfA-skfB-skfC-skfE-skfF-skfG-skfH operon is deleted, increased rate of spore formation; a double operon deletion (sdpA-sdpC plus skfA-skfH) makes spores even faster (PubMed:12817086).</text>
</comment>
<comment type="miscellaneous">
    <text evidence="2">Accelerated cannibalism by skf- cells is seen on solid media but not in liquid media.</text>
</comment>
<comment type="sequence caution" evidence="5">
    <conflict type="frameshift">
        <sequence resource="EMBL-CDS" id="BAA33090"/>
    </conflict>
</comment>
<comment type="sequence caution" evidence="5">
    <conflict type="frameshift">
        <sequence resource="EMBL-CDS" id="BAA33091"/>
    </conflict>
</comment>
<sequence length="496" mass="56292">MNSLSLVFWSILAVVGLLLFIKFKPPTIASLLLSKDEAKEISIQFIKEFVGIDVENWDFYSVYWYDHDTVNKLHHLGILKKNRKVLYDVGLVESWRVRFVHQNQSFVVGVNANREITFFYADVPKKTLSGKFEQVSPETLKQRLMASPDGLWSRANMTGTGKKEEDFREVSTYWYIAEAGDIRLKVTVELQGGRISYIGTEQEILTDQMSKVIRDEQVESTFGVSGMLGSALAMILAILILVFMDVQTSIIFSLVLGLLIIICQSLTLKEDIQLTIVNAYDARMSVKTVSLLGILSTLLTGLLTGFVVFICSLAGNALAGDFGWKTFEQPIVQIFYGIGAGLISLGVTSLLFNLLEKKQYLRISPELSNRTVFLSGFTFRQGLNMSIQSSIGEEVIYRLLMIPVIWWMSGNILISIIVSSFLWAVMHQVTGYDPRWIRWLHLFIFGCFLGVLFIKFGFICVLVAHFIHNLVLVCMPLWQFKLQKHMHHDQPKHTSL</sequence>
<organism>
    <name type="scientific">Bacillus subtilis (strain 168)</name>
    <dbReference type="NCBI Taxonomy" id="224308"/>
    <lineage>
        <taxon>Bacteria</taxon>
        <taxon>Bacillati</taxon>
        <taxon>Bacillota</taxon>
        <taxon>Bacilli</taxon>
        <taxon>Bacillales</taxon>
        <taxon>Bacillaceae</taxon>
        <taxon>Bacillus</taxon>
    </lineage>
</organism>
<protein>
    <recommendedName>
        <fullName>Sporulation-killing factor biosynthesis protein SkfC</fullName>
    </recommendedName>
</protein>
<proteinExistence type="evidence at protein level"/>
<reference key="1">
    <citation type="submission" date="1997-07" db="EMBL/GenBank/DDBJ databases">
        <title>Sequence analysis of the 70kb region between 17 and 23 degree of the Bacillus subtilis chromosome.</title>
        <authorList>
            <person name="Haga K."/>
            <person name="Liu H."/>
            <person name="Yasumoto K."/>
            <person name="Takahashi H."/>
            <person name="Yoshikawa H."/>
        </authorList>
    </citation>
    <scope>NUCLEOTIDE SEQUENCE [GENOMIC DNA]</scope>
    <source>
        <strain>168</strain>
    </source>
</reference>
<reference key="2">
    <citation type="journal article" date="1997" name="Nature">
        <title>The complete genome sequence of the Gram-positive bacterium Bacillus subtilis.</title>
        <authorList>
            <person name="Kunst F."/>
            <person name="Ogasawara N."/>
            <person name="Moszer I."/>
            <person name="Albertini A.M."/>
            <person name="Alloni G."/>
            <person name="Azevedo V."/>
            <person name="Bertero M.G."/>
            <person name="Bessieres P."/>
            <person name="Bolotin A."/>
            <person name="Borchert S."/>
            <person name="Borriss R."/>
            <person name="Boursier L."/>
            <person name="Brans A."/>
            <person name="Braun M."/>
            <person name="Brignell S.C."/>
            <person name="Bron S."/>
            <person name="Brouillet S."/>
            <person name="Bruschi C.V."/>
            <person name="Caldwell B."/>
            <person name="Capuano V."/>
            <person name="Carter N.M."/>
            <person name="Choi S.-K."/>
            <person name="Codani J.-J."/>
            <person name="Connerton I.F."/>
            <person name="Cummings N.J."/>
            <person name="Daniel R.A."/>
            <person name="Denizot F."/>
            <person name="Devine K.M."/>
            <person name="Duesterhoeft A."/>
            <person name="Ehrlich S.D."/>
            <person name="Emmerson P.T."/>
            <person name="Entian K.-D."/>
            <person name="Errington J."/>
            <person name="Fabret C."/>
            <person name="Ferrari E."/>
            <person name="Foulger D."/>
            <person name="Fritz C."/>
            <person name="Fujita M."/>
            <person name="Fujita Y."/>
            <person name="Fuma S."/>
            <person name="Galizzi A."/>
            <person name="Galleron N."/>
            <person name="Ghim S.-Y."/>
            <person name="Glaser P."/>
            <person name="Goffeau A."/>
            <person name="Golightly E.J."/>
            <person name="Grandi G."/>
            <person name="Guiseppi G."/>
            <person name="Guy B.J."/>
            <person name="Haga K."/>
            <person name="Haiech J."/>
            <person name="Harwood C.R."/>
            <person name="Henaut A."/>
            <person name="Hilbert H."/>
            <person name="Holsappel S."/>
            <person name="Hosono S."/>
            <person name="Hullo M.-F."/>
            <person name="Itaya M."/>
            <person name="Jones L.-M."/>
            <person name="Joris B."/>
            <person name="Karamata D."/>
            <person name="Kasahara Y."/>
            <person name="Klaerr-Blanchard M."/>
            <person name="Klein C."/>
            <person name="Kobayashi Y."/>
            <person name="Koetter P."/>
            <person name="Koningstein G."/>
            <person name="Krogh S."/>
            <person name="Kumano M."/>
            <person name="Kurita K."/>
            <person name="Lapidus A."/>
            <person name="Lardinois S."/>
            <person name="Lauber J."/>
            <person name="Lazarevic V."/>
            <person name="Lee S.-M."/>
            <person name="Levine A."/>
            <person name="Liu H."/>
            <person name="Masuda S."/>
            <person name="Mauel C."/>
            <person name="Medigue C."/>
            <person name="Medina N."/>
            <person name="Mellado R.P."/>
            <person name="Mizuno M."/>
            <person name="Moestl D."/>
            <person name="Nakai S."/>
            <person name="Noback M."/>
            <person name="Noone D."/>
            <person name="O'Reilly M."/>
            <person name="Ogawa K."/>
            <person name="Ogiwara A."/>
            <person name="Oudega B."/>
            <person name="Park S.-H."/>
            <person name="Parro V."/>
            <person name="Pohl T.M."/>
            <person name="Portetelle D."/>
            <person name="Porwollik S."/>
            <person name="Prescott A.M."/>
            <person name="Presecan E."/>
            <person name="Pujic P."/>
            <person name="Purnelle B."/>
            <person name="Rapoport G."/>
            <person name="Rey M."/>
            <person name="Reynolds S."/>
            <person name="Rieger M."/>
            <person name="Rivolta C."/>
            <person name="Rocha E."/>
            <person name="Roche B."/>
            <person name="Rose M."/>
            <person name="Sadaie Y."/>
            <person name="Sato T."/>
            <person name="Scanlan E."/>
            <person name="Schleich S."/>
            <person name="Schroeter R."/>
            <person name="Scoffone F."/>
            <person name="Sekiguchi J."/>
            <person name="Sekowska A."/>
            <person name="Seror S.J."/>
            <person name="Serror P."/>
            <person name="Shin B.-S."/>
            <person name="Soldo B."/>
            <person name="Sorokin A."/>
            <person name="Tacconi E."/>
            <person name="Takagi T."/>
            <person name="Takahashi H."/>
            <person name="Takemaru K."/>
            <person name="Takeuchi M."/>
            <person name="Tamakoshi A."/>
            <person name="Tanaka T."/>
            <person name="Terpstra P."/>
            <person name="Tognoni A."/>
            <person name="Tosato V."/>
            <person name="Uchiyama S."/>
            <person name="Vandenbol M."/>
            <person name="Vannier F."/>
            <person name="Vassarotti A."/>
            <person name="Viari A."/>
            <person name="Wambutt R."/>
            <person name="Wedler E."/>
            <person name="Wedler H."/>
            <person name="Weitzenegger T."/>
            <person name="Winters P."/>
            <person name="Wipat A."/>
            <person name="Yamamoto H."/>
            <person name="Yamane K."/>
            <person name="Yasumoto K."/>
            <person name="Yata K."/>
            <person name="Yoshida K."/>
            <person name="Yoshikawa H.-F."/>
            <person name="Zumstein E."/>
            <person name="Yoshikawa H."/>
            <person name="Danchin A."/>
        </authorList>
    </citation>
    <scope>NUCLEOTIDE SEQUENCE [LARGE SCALE GENOMIC DNA]</scope>
    <source>
        <strain>168</strain>
    </source>
</reference>
<reference key="3">
    <citation type="journal article" date="2009" name="Microbiology">
        <title>From a consortium sequence to a unified sequence: the Bacillus subtilis 168 reference genome a decade later.</title>
        <authorList>
            <person name="Barbe V."/>
            <person name="Cruveiller S."/>
            <person name="Kunst F."/>
            <person name="Lenoble P."/>
            <person name="Meurice G."/>
            <person name="Sekowska A."/>
            <person name="Vallenet D."/>
            <person name="Wang T."/>
            <person name="Moszer I."/>
            <person name="Medigue C."/>
            <person name="Danchin A."/>
        </authorList>
    </citation>
    <scope>SEQUENCE REVISION</scope>
</reference>
<reference key="4">
    <citation type="journal article" date="2003" name="Science">
        <title>Cannibalism by sporulating bacteria.</title>
        <authorList>
            <person name="Gonzalez-Pastor J.E."/>
            <person name="Hobbs E.C."/>
            <person name="Losick R."/>
        </authorList>
    </citation>
    <scope>FUNCTION IN SYNTHESIS OF SKFA</scope>
    <scope>INDUCTION</scope>
    <scope>DISRUPTION PHENOTYPE</scope>
    <source>
        <strain>168 / PY79</strain>
    </source>
</reference>
<reference key="5">
    <citation type="journal article" date="2007" name="J. Bacteriol.">
        <title>Abh and AbrB control of Bacillus subtilis antimicrobial gene expression.</title>
        <authorList>
            <person name="Strauch M.A."/>
            <person name="Bobay B.G."/>
            <person name="Cavanagh J."/>
            <person name="Yao F."/>
            <person name="Wilson A."/>
            <person name="Le Breton Y."/>
        </authorList>
    </citation>
    <scope>REPRESSION BY ABRB AND ABH</scope>
</reference>
<name>SKFC_BACSU</name>
<gene>
    <name evidence="4" type="primary">skfC</name>
    <name type="synonym">skfD</name>
    <name type="synonym">ybcS</name>
    <name type="synonym">ybcT</name>
    <name type="ordered locus">BSU01935</name>
    <name type="ORF">BSU01930</name>
    <name type="ORF">BSU01940</name>
</gene>
<accession>O31425</accession>
<accession>C0H3T0</accession>
<accession>O31426</accession>
<accession>Q7DL63</accession>
<keyword id="KW-0045">Antibiotic biosynthesis</keyword>
<keyword id="KW-0871">Bacteriocin biosynthesis</keyword>
<keyword id="KW-0472">Membrane</keyword>
<keyword id="KW-1185">Reference proteome</keyword>
<keyword id="KW-0812">Transmembrane</keyword>
<keyword id="KW-1133">Transmembrane helix</keyword>
<evidence type="ECO:0000255" key="1"/>
<evidence type="ECO:0000269" key="2">
    <source>
    </source>
</evidence>
<evidence type="ECO:0000269" key="3">
    <source>
    </source>
</evidence>
<evidence type="ECO:0000303" key="4">
    <source>
    </source>
</evidence>
<evidence type="ECO:0000305" key="5"/>
<feature type="chain" id="PRO_0000013690" description="Sporulation-killing factor biosynthesis protein SkfC">
    <location>
        <begin position="1"/>
        <end position="496"/>
    </location>
</feature>
<feature type="transmembrane region" description="Helical" evidence="1">
    <location>
        <begin position="1"/>
        <end position="21"/>
    </location>
</feature>
<feature type="transmembrane region" description="Helical" evidence="1">
    <location>
        <begin position="224"/>
        <end position="244"/>
    </location>
</feature>
<feature type="transmembrane region" description="Helical" evidence="1">
    <location>
        <begin position="248"/>
        <end position="268"/>
    </location>
</feature>
<feature type="transmembrane region" description="Helical" evidence="1">
    <location>
        <begin position="291"/>
        <end position="311"/>
    </location>
</feature>
<feature type="transmembrane region" description="Helical" evidence="1">
    <location>
        <begin position="331"/>
        <end position="351"/>
    </location>
</feature>
<feature type="transmembrane region" description="Helical" evidence="1">
    <location>
        <begin position="399"/>
        <end position="419"/>
    </location>
</feature>
<feature type="transmembrane region" description="Helical" evidence="1">
    <location>
        <begin position="443"/>
        <end position="463"/>
    </location>
</feature>